<dbReference type="EC" id="1.10.3.9" evidence="1"/>
<dbReference type="EMBL" id="AB020622">
    <property type="protein sequence ID" value="BAA82782.1"/>
    <property type="molecule type" value="Genomic_DNA"/>
</dbReference>
<dbReference type="SMR" id="Q9TNF7"/>
<dbReference type="GO" id="GO:0009535">
    <property type="term" value="C:chloroplast thylakoid membrane"/>
    <property type="evidence" value="ECO:0007669"/>
    <property type="project" value="UniProtKB-SubCell"/>
</dbReference>
<dbReference type="GO" id="GO:0009523">
    <property type="term" value="C:photosystem II"/>
    <property type="evidence" value="ECO:0007669"/>
    <property type="project" value="UniProtKB-KW"/>
</dbReference>
<dbReference type="GO" id="GO:0016168">
    <property type="term" value="F:chlorophyll binding"/>
    <property type="evidence" value="ECO:0007669"/>
    <property type="project" value="UniProtKB-UniRule"/>
</dbReference>
<dbReference type="GO" id="GO:0045156">
    <property type="term" value="F:electron transporter, transferring electrons within the cyclic electron transport pathway of photosynthesis activity"/>
    <property type="evidence" value="ECO:0007669"/>
    <property type="project" value="InterPro"/>
</dbReference>
<dbReference type="GO" id="GO:0005506">
    <property type="term" value="F:iron ion binding"/>
    <property type="evidence" value="ECO:0007669"/>
    <property type="project" value="UniProtKB-UniRule"/>
</dbReference>
<dbReference type="GO" id="GO:0016682">
    <property type="term" value="F:oxidoreductase activity, acting on diphenols and related substances as donors, oxygen as acceptor"/>
    <property type="evidence" value="ECO:0007669"/>
    <property type="project" value="UniProtKB-UniRule"/>
</dbReference>
<dbReference type="GO" id="GO:0010242">
    <property type="term" value="F:oxygen evolving activity"/>
    <property type="evidence" value="ECO:0007669"/>
    <property type="project" value="UniProtKB-EC"/>
</dbReference>
<dbReference type="GO" id="GO:0009772">
    <property type="term" value="P:photosynthetic electron transport in photosystem II"/>
    <property type="evidence" value="ECO:0007669"/>
    <property type="project" value="InterPro"/>
</dbReference>
<dbReference type="GO" id="GO:0009635">
    <property type="term" value="P:response to herbicide"/>
    <property type="evidence" value="ECO:0007669"/>
    <property type="project" value="UniProtKB-KW"/>
</dbReference>
<dbReference type="CDD" id="cd09289">
    <property type="entry name" value="Photosystem-II_D1"/>
    <property type="match status" value="1"/>
</dbReference>
<dbReference type="FunFam" id="1.20.85.10:FF:000002">
    <property type="entry name" value="Photosystem II protein D1"/>
    <property type="match status" value="1"/>
</dbReference>
<dbReference type="Gene3D" id="1.20.85.10">
    <property type="entry name" value="Photosystem II protein D1-like"/>
    <property type="match status" value="1"/>
</dbReference>
<dbReference type="HAMAP" id="MF_01379">
    <property type="entry name" value="PSII_PsbA_D1"/>
    <property type="match status" value="1"/>
</dbReference>
<dbReference type="InterPro" id="IPR055266">
    <property type="entry name" value="D1/D2"/>
</dbReference>
<dbReference type="InterPro" id="IPR036854">
    <property type="entry name" value="Photo_II_D1/D2_sf"/>
</dbReference>
<dbReference type="InterPro" id="IPR000484">
    <property type="entry name" value="Photo_RC_L/M"/>
</dbReference>
<dbReference type="InterPro" id="IPR055265">
    <property type="entry name" value="Photo_RC_L/M_CS"/>
</dbReference>
<dbReference type="InterPro" id="IPR005867">
    <property type="entry name" value="PSII_D1"/>
</dbReference>
<dbReference type="NCBIfam" id="TIGR01151">
    <property type="entry name" value="psbA"/>
    <property type="match status" value="1"/>
</dbReference>
<dbReference type="PANTHER" id="PTHR33149:SF12">
    <property type="entry name" value="PHOTOSYSTEM II D2 PROTEIN"/>
    <property type="match status" value="1"/>
</dbReference>
<dbReference type="PANTHER" id="PTHR33149">
    <property type="entry name" value="PHOTOSYSTEM II PROTEIN D1"/>
    <property type="match status" value="1"/>
</dbReference>
<dbReference type="Pfam" id="PF00124">
    <property type="entry name" value="Photo_RC"/>
    <property type="match status" value="1"/>
</dbReference>
<dbReference type="PRINTS" id="PR00256">
    <property type="entry name" value="REACTNCENTRE"/>
</dbReference>
<dbReference type="SUPFAM" id="SSF81483">
    <property type="entry name" value="Bacterial photosystem II reaction centre, L and M subunits"/>
    <property type="match status" value="1"/>
</dbReference>
<dbReference type="PROSITE" id="PS00244">
    <property type="entry name" value="REACTION_CENTER"/>
    <property type="match status" value="1"/>
</dbReference>
<keyword id="KW-0007">Acetylation</keyword>
<keyword id="KW-0106">Calcium</keyword>
<keyword id="KW-0148">Chlorophyll</keyword>
<keyword id="KW-0150">Chloroplast</keyword>
<keyword id="KW-0157">Chromophore</keyword>
<keyword id="KW-0249">Electron transport</keyword>
<keyword id="KW-0359">Herbicide resistance</keyword>
<keyword id="KW-0408">Iron</keyword>
<keyword id="KW-0460">Magnesium</keyword>
<keyword id="KW-0464">Manganese</keyword>
<keyword id="KW-0472">Membrane</keyword>
<keyword id="KW-0479">Metal-binding</keyword>
<keyword id="KW-0560">Oxidoreductase</keyword>
<keyword id="KW-0597">Phosphoprotein</keyword>
<keyword id="KW-0602">Photosynthesis</keyword>
<keyword id="KW-0604">Photosystem II</keyword>
<keyword id="KW-0934">Plastid</keyword>
<keyword id="KW-0793">Thylakoid</keyword>
<keyword id="KW-0812">Transmembrane</keyword>
<keyword id="KW-1133">Transmembrane helix</keyword>
<keyword id="KW-0813">Transport</keyword>
<gene>
    <name evidence="1" type="primary">psbA</name>
</gene>
<proteinExistence type="inferred from homology"/>
<evidence type="ECO:0000255" key="1">
    <source>
        <dbReference type="HAMAP-Rule" id="MF_01379"/>
    </source>
</evidence>
<sequence>MTATLERRESASIWGRFCNWVTSTENRLNIGWFGVLMIPTLLTATSVFIIAFIAAPPVDIDGIREPVSGSLLYGNNIISGAIIPTSAAIGLHFYPIWEAASVDEWLYNGGPYELIVLHFLLGVACYMGREWELSYRLGMRPWIAVAYSAPVAAATAVFLIYPIGQGSFSDGMPLGISGTFNFMIVFQAEHNILMHPFHMLGVAGVFGGSLFSAMHGSLVTSSLIRETTENESANAGYKFGQEQETYNIVAAHGYFGRLIFQYASFNNSRSLHFFLAAWPVVGIWFTALGISTMAFNLNGFNFNQSVVDSQGRVINTWADIINRANLGMEVMHERNAHNFPLDLAAVEAPAVNG</sequence>
<organism>
    <name type="scientific">Dumortiera hirsuta</name>
    <name type="common">Liverwort</name>
    <dbReference type="NCBI Taxonomy" id="56917"/>
    <lineage>
        <taxon>Eukaryota</taxon>
        <taxon>Viridiplantae</taxon>
        <taxon>Streptophyta</taxon>
        <taxon>Embryophyta</taxon>
        <taxon>Marchantiophyta</taxon>
        <taxon>Marchantiopsida</taxon>
        <taxon>Marchantiidae</taxon>
        <taxon>Marchantiales</taxon>
        <taxon>Dumortieraceae</taxon>
        <taxon>Dumortiera</taxon>
    </lineage>
</organism>
<feature type="initiator methionine" description="Removed" evidence="1">
    <location>
        <position position="1"/>
    </location>
</feature>
<feature type="chain" id="PRO_0000090438" description="Photosystem II protein D1" evidence="1">
    <location>
        <begin position="2"/>
        <end position="344"/>
    </location>
</feature>
<feature type="propeptide" id="PRO_0000316452" evidence="1">
    <location>
        <begin position="345"/>
        <end position="353"/>
    </location>
</feature>
<feature type="transmembrane region" description="Helical" evidence="1">
    <location>
        <begin position="29"/>
        <end position="46"/>
    </location>
</feature>
<feature type="transmembrane region" description="Helical" evidence="1">
    <location>
        <begin position="118"/>
        <end position="133"/>
    </location>
</feature>
<feature type="transmembrane region" description="Helical" evidence="1">
    <location>
        <begin position="142"/>
        <end position="156"/>
    </location>
</feature>
<feature type="transmembrane region" description="Helical" evidence="1">
    <location>
        <begin position="197"/>
        <end position="218"/>
    </location>
</feature>
<feature type="transmembrane region" description="Helical" evidence="1">
    <location>
        <begin position="274"/>
        <end position="288"/>
    </location>
</feature>
<feature type="binding site" description="axial binding residue" evidence="1">
    <location>
        <position position="118"/>
    </location>
    <ligand>
        <name>chlorophyll a</name>
        <dbReference type="ChEBI" id="CHEBI:58416"/>
        <label>ChlzD1</label>
    </ligand>
    <ligandPart>
        <name>Mg</name>
        <dbReference type="ChEBI" id="CHEBI:25107"/>
    </ligandPart>
</feature>
<feature type="binding site" evidence="1">
    <location>
        <position position="126"/>
    </location>
    <ligand>
        <name>pheophytin a</name>
        <dbReference type="ChEBI" id="CHEBI:136840"/>
        <label>D1</label>
    </ligand>
</feature>
<feature type="binding site" evidence="1">
    <location>
        <position position="170"/>
    </location>
    <ligand>
        <name>[CaMn4O5] cluster</name>
        <dbReference type="ChEBI" id="CHEBI:189552"/>
    </ligand>
</feature>
<feature type="binding site" evidence="1">
    <location>
        <position position="189"/>
    </location>
    <ligand>
        <name>[CaMn4O5] cluster</name>
        <dbReference type="ChEBI" id="CHEBI:189552"/>
    </ligand>
</feature>
<feature type="binding site" description="axial binding residue" evidence="1">
    <location>
        <position position="198"/>
    </location>
    <ligand>
        <name>chlorophyll a</name>
        <dbReference type="ChEBI" id="CHEBI:58416"/>
        <label>PD1</label>
    </ligand>
    <ligandPart>
        <name>Mg</name>
        <dbReference type="ChEBI" id="CHEBI:25107"/>
    </ligandPart>
</feature>
<feature type="binding site" evidence="1">
    <location>
        <position position="215"/>
    </location>
    <ligand>
        <name>a quinone</name>
        <dbReference type="ChEBI" id="CHEBI:132124"/>
        <label>B</label>
    </ligand>
</feature>
<feature type="binding site" evidence="1">
    <location>
        <position position="215"/>
    </location>
    <ligand>
        <name>Fe cation</name>
        <dbReference type="ChEBI" id="CHEBI:24875"/>
        <note>ligand shared with heterodimeric partner</note>
    </ligand>
</feature>
<feature type="binding site" evidence="1">
    <location>
        <begin position="264"/>
        <end position="265"/>
    </location>
    <ligand>
        <name>a quinone</name>
        <dbReference type="ChEBI" id="CHEBI:132124"/>
        <label>B</label>
    </ligand>
</feature>
<feature type="binding site" evidence="1">
    <location>
        <position position="272"/>
    </location>
    <ligand>
        <name>Fe cation</name>
        <dbReference type="ChEBI" id="CHEBI:24875"/>
        <note>ligand shared with heterodimeric partner</note>
    </ligand>
</feature>
<feature type="binding site" evidence="1">
    <location>
        <position position="332"/>
    </location>
    <ligand>
        <name>[CaMn4O5] cluster</name>
        <dbReference type="ChEBI" id="CHEBI:189552"/>
    </ligand>
</feature>
<feature type="binding site" evidence="1">
    <location>
        <position position="333"/>
    </location>
    <ligand>
        <name>[CaMn4O5] cluster</name>
        <dbReference type="ChEBI" id="CHEBI:189552"/>
    </ligand>
</feature>
<feature type="binding site" evidence="1">
    <location>
        <position position="342"/>
    </location>
    <ligand>
        <name>[CaMn4O5] cluster</name>
        <dbReference type="ChEBI" id="CHEBI:189552"/>
    </ligand>
</feature>
<feature type="binding site" evidence="1">
    <location>
        <position position="344"/>
    </location>
    <ligand>
        <name>[CaMn4O5] cluster</name>
        <dbReference type="ChEBI" id="CHEBI:189552"/>
    </ligand>
</feature>
<feature type="site" description="Tyrosine radical intermediate" evidence="1">
    <location>
        <position position="161"/>
    </location>
</feature>
<feature type="site" description="Stabilizes free radical intermediate" evidence="1">
    <location>
        <position position="190"/>
    </location>
</feature>
<feature type="site" description="Cleavage; by CTPA" evidence="1">
    <location>
        <begin position="344"/>
        <end position="345"/>
    </location>
</feature>
<feature type="modified residue" description="N-acetylthreonine" evidence="1">
    <location>
        <position position="2"/>
    </location>
</feature>
<feature type="modified residue" description="Phosphothreonine" evidence="1">
    <location>
        <position position="2"/>
    </location>
</feature>
<geneLocation type="chloroplast"/>
<reference key="1">
    <citation type="journal article" date="2001" name="Genes Genet. Syst.">
        <title>Phylogenetic relationships among taxa of the liverwort Conocephalum conicum (Conocephalaceae) revealed by psbA sequence.</title>
        <authorList>
            <person name="Ki H.N."/>
            <person name="Nitasaka E."/>
            <person name="Odrzykoski I.J."/>
            <person name="Yamazak T."/>
        </authorList>
    </citation>
    <scope>NUCLEOTIDE SEQUENCE [GENOMIC DNA]</scope>
    <source>
        <tissue>Thallus</tissue>
    </source>
</reference>
<protein>
    <recommendedName>
        <fullName evidence="1">Photosystem II protein D1</fullName>
        <shortName evidence="1">PSII D1 protein</shortName>
        <ecNumber evidence="1">1.10.3.9</ecNumber>
    </recommendedName>
    <alternativeName>
        <fullName evidence="1">Photosystem II Q(B) protein</fullName>
    </alternativeName>
</protein>
<name>PSBA_DUMHI</name>
<comment type="function">
    <text evidence="1">Photosystem II (PSII) is a light-driven water:plastoquinone oxidoreductase that uses light energy to abstract electrons from H(2)O, generating O(2) and a proton gradient subsequently used for ATP formation. It consists of a core antenna complex that captures photons, and an electron transfer chain that converts photonic excitation into a charge separation. The D1/D2 (PsbA/PsbD) reaction center heterodimer binds P680, the primary electron donor of PSII as well as several subsequent electron acceptors.</text>
</comment>
<comment type="catalytic activity">
    <reaction evidence="1">
        <text>2 a plastoquinone + 4 hnu + 2 H2O = 2 a plastoquinol + O2</text>
        <dbReference type="Rhea" id="RHEA:36359"/>
        <dbReference type="Rhea" id="RHEA-COMP:9561"/>
        <dbReference type="Rhea" id="RHEA-COMP:9562"/>
        <dbReference type="ChEBI" id="CHEBI:15377"/>
        <dbReference type="ChEBI" id="CHEBI:15379"/>
        <dbReference type="ChEBI" id="CHEBI:17757"/>
        <dbReference type="ChEBI" id="CHEBI:30212"/>
        <dbReference type="ChEBI" id="CHEBI:62192"/>
        <dbReference type="EC" id="1.10.3.9"/>
    </reaction>
</comment>
<comment type="cofactor">
    <text evidence="1">The D1/D2 heterodimer binds P680, chlorophylls that are the primary electron donor of PSII, and subsequent electron acceptors. It shares a non-heme iron and each subunit binds pheophytin, quinone, additional chlorophylls, carotenoids and lipids. D1 provides most of the ligands for the Mn4-Ca-O5 cluster of the oxygen-evolving complex (OEC). There is also a Cl(-1) ion associated with D1 and D2, which is required for oxygen evolution. The PSII complex binds additional chlorophylls, carotenoids and specific lipids.</text>
</comment>
<comment type="subunit">
    <text evidence="1">PSII is composed of 1 copy each of membrane proteins PsbA, PsbB, PsbC, PsbD, PsbE, PsbF, PsbH, PsbI, PsbJ, PsbK, PsbL, PsbM, PsbT, PsbX, PsbY, PsbZ, Psb30/Ycf12, at least 3 peripheral proteins of the oxygen-evolving complex and a large number of cofactors. It forms dimeric complexes.</text>
</comment>
<comment type="subcellular location">
    <subcellularLocation>
        <location evidence="1">Plastid</location>
        <location evidence="1">Chloroplast thylakoid membrane</location>
        <topology evidence="1">Multi-pass membrane protein</topology>
    </subcellularLocation>
</comment>
<comment type="PTM">
    <text evidence="1">Tyr-161 forms a radical intermediate that is referred to as redox-active TyrZ, YZ or Y-Z.</text>
</comment>
<comment type="PTM">
    <text evidence="1">C-terminally processed by CTPA; processing is essential to allow assembly of the oxygen-evolving complex and thus photosynthetic growth.</text>
</comment>
<comment type="miscellaneous">
    <text evidence="1">2 of the reaction center chlorophylls (ChlD1 and ChlD2) are entirely coordinated by water.</text>
</comment>
<comment type="miscellaneous">
    <text evidence="1">Herbicides such as atrazine, BNT, diuron or ioxynil bind in the Q(B) binding site and block subsequent electron transfer.</text>
</comment>
<comment type="similarity">
    <text evidence="1">Belongs to the reaction center PufL/M/PsbA/D family.</text>
</comment>
<accession>Q9TNF7</accession>